<evidence type="ECO:0000305" key="1"/>
<evidence type="ECO:0007829" key="2">
    <source>
        <dbReference type="PDB" id="1KUT"/>
    </source>
</evidence>
<comment type="catalytic activity">
    <reaction>
        <text>5-amino-1-(5-phospho-D-ribosyl)imidazole-4-carboxylate + L-aspartate + ATP = (2S)-2-[5-amino-1-(5-phospho-beta-D-ribosyl)imidazole-4-carboxamido]succinate + ADP + phosphate + 2 H(+)</text>
        <dbReference type="Rhea" id="RHEA:22628"/>
        <dbReference type="ChEBI" id="CHEBI:15378"/>
        <dbReference type="ChEBI" id="CHEBI:29991"/>
        <dbReference type="ChEBI" id="CHEBI:30616"/>
        <dbReference type="ChEBI" id="CHEBI:43474"/>
        <dbReference type="ChEBI" id="CHEBI:58443"/>
        <dbReference type="ChEBI" id="CHEBI:77657"/>
        <dbReference type="ChEBI" id="CHEBI:456216"/>
        <dbReference type="EC" id="6.3.2.6"/>
    </reaction>
</comment>
<comment type="pathway">
    <text>Purine metabolism; IMP biosynthesis via de novo pathway; 5-amino-1-(5-phospho-D-ribosyl)imidazole-4-carboxamide from 5-amino-1-(5-phospho-D-ribosyl)imidazole-4-carboxylate: step 1/2.</text>
</comment>
<comment type="similarity">
    <text evidence="1">Belongs to the SAICAR synthetase family.</text>
</comment>
<keyword id="KW-0002">3D-structure</keyword>
<keyword id="KW-0067">ATP-binding</keyword>
<keyword id="KW-0436">Ligase</keyword>
<keyword id="KW-0547">Nucleotide-binding</keyword>
<keyword id="KW-0658">Purine biosynthesis</keyword>
<keyword id="KW-1185">Reference proteome</keyword>
<dbReference type="EC" id="6.3.2.6"/>
<dbReference type="EMBL" id="AE000512">
    <property type="protein sequence ID" value="AAD36318.1"/>
    <property type="molecule type" value="Genomic_DNA"/>
</dbReference>
<dbReference type="PIR" id="E72276">
    <property type="entry name" value="E72276"/>
</dbReference>
<dbReference type="RefSeq" id="NP_229048.1">
    <property type="nucleotide sequence ID" value="NC_000853.1"/>
</dbReference>
<dbReference type="RefSeq" id="WP_004080029.1">
    <property type="nucleotide sequence ID" value="NC_000853.1"/>
</dbReference>
<dbReference type="PDB" id="1KUT">
    <property type="method" value="X-ray"/>
    <property type="resolution" value="2.20 A"/>
    <property type="chains" value="A/B=1-230"/>
</dbReference>
<dbReference type="PDBsum" id="1KUT"/>
<dbReference type="SMR" id="Q9X0X0"/>
<dbReference type="FunCoup" id="Q9X0X0">
    <property type="interactions" value="324"/>
</dbReference>
<dbReference type="STRING" id="243274.TM_1243"/>
<dbReference type="PaxDb" id="243274-THEMA_08120"/>
<dbReference type="EnsemblBacteria" id="AAD36318">
    <property type="protein sequence ID" value="AAD36318"/>
    <property type="gene ID" value="TM_1243"/>
</dbReference>
<dbReference type="KEGG" id="tma:TM1243"/>
<dbReference type="KEGG" id="tmi:THEMA_08120"/>
<dbReference type="KEGG" id="tmm:Tmari_1248"/>
<dbReference type="KEGG" id="tmw:THMA_1268"/>
<dbReference type="eggNOG" id="COG0152">
    <property type="taxonomic scope" value="Bacteria"/>
</dbReference>
<dbReference type="InParanoid" id="Q9X0X0"/>
<dbReference type="OrthoDB" id="9801549at2"/>
<dbReference type="UniPathway" id="UPA00074">
    <property type="reaction ID" value="UER00131"/>
</dbReference>
<dbReference type="EvolutionaryTrace" id="Q9X0X0"/>
<dbReference type="Proteomes" id="UP000008183">
    <property type="component" value="Chromosome"/>
</dbReference>
<dbReference type="GO" id="GO:0005524">
    <property type="term" value="F:ATP binding"/>
    <property type="evidence" value="ECO:0007669"/>
    <property type="project" value="UniProtKB-KW"/>
</dbReference>
<dbReference type="GO" id="GO:0004639">
    <property type="term" value="F:phosphoribosylaminoimidazolesuccinocarboxamide synthase activity"/>
    <property type="evidence" value="ECO:0007669"/>
    <property type="project" value="UniProtKB-UniRule"/>
</dbReference>
<dbReference type="GO" id="GO:0006189">
    <property type="term" value="P:'de novo' IMP biosynthetic process"/>
    <property type="evidence" value="ECO:0007669"/>
    <property type="project" value="UniProtKB-UniRule"/>
</dbReference>
<dbReference type="GO" id="GO:0009236">
    <property type="term" value="P:cobalamin biosynthetic process"/>
    <property type="evidence" value="ECO:0007669"/>
    <property type="project" value="InterPro"/>
</dbReference>
<dbReference type="CDD" id="cd01415">
    <property type="entry name" value="SAICAR_synt_PurC"/>
    <property type="match status" value="1"/>
</dbReference>
<dbReference type="FunFam" id="3.30.200.20:FF:000865">
    <property type="entry name" value="Phosphoribosylaminoimidazole-succinocarboxamide synthase"/>
    <property type="match status" value="1"/>
</dbReference>
<dbReference type="FunFam" id="3.30.470.20:FF:000006">
    <property type="entry name" value="Phosphoribosylaminoimidazole-succinocarboxamide synthase"/>
    <property type="match status" value="1"/>
</dbReference>
<dbReference type="Gene3D" id="3.30.470.20">
    <property type="entry name" value="ATP-grasp fold, B domain"/>
    <property type="match status" value="1"/>
</dbReference>
<dbReference type="Gene3D" id="3.30.200.20">
    <property type="entry name" value="Phosphorylase Kinase, domain 1"/>
    <property type="match status" value="1"/>
</dbReference>
<dbReference type="HAMAP" id="MF_00137">
    <property type="entry name" value="SAICAR_synth"/>
    <property type="match status" value="1"/>
</dbReference>
<dbReference type="InterPro" id="IPR028923">
    <property type="entry name" value="SAICAR_synt/ADE2_N"/>
</dbReference>
<dbReference type="InterPro" id="IPR033934">
    <property type="entry name" value="SAICAR_synt_PurC"/>
</dbReference>
<dbReference type="InterPro" id="IPR050089">
    <property type="entry name" value="SAICAR_synthetase"/>
</dbReference>
<dbReference type="InterPro" id="IPR018236">
    <property type="entry name" value="SAICAR_synthetase_CS"/>
</dbReference>
<dbReference type="PANTHER" id="PTHR43599">
    <property type="entry name" value="MULTIFUNCTIONAL PROTEIN ADE2"/>
    <property type="match status" value="1"/>
</dbReference>
<dbReference type="PANTHER" id="PTHR43599:SF3">
    <property type="entry name" value="SI:DKEY-6E2.2"/>
    <property type="match status" value="1"/>
</dbReference>
<dbReference type="Pfam" id="PF01259">
    <property type="entry name" value="SAICAR_synt"/>
    <property type="match status" value="1"/>
</dbReference>
<dbReference type="SUPFAM" id="SSF56104">
    <property type="entry name" value="SAICAR synthase-like"/>
    <property type="match status" value="1"/>
</dbReference>
<dbReference type="PROSITE" id="PS01057">
    <property type="entry name" value="SAICAR_SYNTHETASE_1"/>
    <property type="match status" value="1"/>
</dbReference>
<reference key="1">
    <citation type="journal article" date="1999" name="Nature">
        <title>Evidence for lateral gene transfer between Archaea and Bacteria from genome sequence of Thermotoga maritima.</title>
        <authorList>
            <person name="Nelson K.E."/>
            <person name="Clayton R.A."/>
            <person name="Gill S.R."/>
            <person name="Gwinn M.L."/>
            <person name="Dodson R.J."/>
            <person name="Haft D.H."/>
            <person name="Hickey E.K."/>
            <person name="Peterson J.D."/>
            <person name="Nelson W.C."/>
            <person name="Ketchum K.A."/>
            <person name="McDonald L.A."/>
            <person name="Utterback T.R."/>
            <person name="Malek J.A."/>
            <person name="Linher K.D."/>
            <person name="Garrett M.M."/>
            <person name="Stewart A.M."/>
            <person name="Cotton M.D."/>
            <person name="Pratt M.S."/>
            <person name="Phillips C.A."/>
            <person name="Richardson D.L."/>
            <person name="Heidelberg J.F."/>
            <person name="Sutton G.G."/>
            <person name="Fleischmann R.D."/>
            <person name="Eisen J.A."/>
            <person name="White O."/>
            <person name="Salzberg S.L."/>
            <person name="Smith H.O."/>
            <person name="Venter J.C."/>
            <person name="Fraser C.M."/>
        </authorList>
    </citation>
    <scope>NUCLEOTIDE SEQUENCE [LARGE SCALE GENOMIC DNA]</scope>
    <source>
        <strain>ATCC 43589 / DSM 3109 / JCM 10099 / NBRC 100826 / MSB8</strain>
    </source>
</reference>
<proteinExistence type="evidence at protein level"/>
<name>PUR7_THEMA</name>
<organism>
    <name type="scientific">Thermotoga maritima (strain ATCC 43589 / DSM 3109 / JCM 10099 / NBRC 100826 / MSB8)</name>
    <dbReference type="NCBI Taxonomy" id="243274"/>
    <lineage>
        <taxon>Bacteria</taxon>
        <taxon>Thermotogati</taxon>
        <taxon>Thermotogota</taxon>
        <taxon>Thermotogae</taxon>
        <taxon>Thermotogales</taxon>
        <taxon>Thermotogaceae</taxon>
        <taxon>Thermotoga</taxon>
    </lineage>
</organism>
<protein>
    <recommendedName>
        <fullName>Phosphoribosylaminoimidazole-succinocarboxamide synthase</fullName>
        <ecNumber>6.3.2.6</ecNumber>
    </recommendedName>
    <alternativeName>
        <fullName>SAICAR synthetase</fullName>
    </alternativeName>
</protein>
<feature type="chain" id="PRO_0000100891" description="Phosphoribosylaminoimidazole-succinocarboxamide synthase">
    <location>
        <begin position="1"/>
        <end position="230"/>
    </location>
</feature>
<feature type="strand" evidence="2">
    <location>
        <begin position="8"/>
        <end position="13"/>
    </location>
</feature>
<feature type="strand" evidence="2">
    <location>
        <begin position="16"/>
        <end position="21"/>
    </location>
</feature>
<feature type="helix" evidence="2">
    <location>
        <begin position="39"/>
        <end position="56"/>
    </location>
</feature>
<feature type="strand" evidence="2">
    <location>
        <begin position="61"/>
        <end position="67"/>
    </location>
</feature>
<feature type="turn" evidence="2">
    <location>
        <begin position="68"/>
        <end position="70"/>
    </location>
</feature>
<feature type="strand" evidence="2">
    <location>
        <begin position="71"/>
        <end position="74"/>
    </location>
</feature>
<feature type="strand" evidence="2">
    <location>
        <begin position="81"/>
        <end position="89"/>
    </location>
</feature>
<feature type="helix" evidence="2">
    <location>
        <begin position="92"/>
        <end position="98"/>
    </location>
</feature>
<feature type="strand" evidence="2">
    <location>
        <begin position="105"/>
        <end position="115"/>
    </location>
</feature>
<feature type="helix" evidence="2">
    <location>
        <begin position="118"/>
        <end position="120"/>
    </location>
</feature>
<feature type="helix" evidence="2">
    <location>
        <begin position="127"/>
        <end position="132"/>
    </location>
</feature>
<feature type="helix" evidence="2">
    <location>
        <begin position="138"/>
        <end position="160"/>
    </location>
</feature>
<feature type="turn" evidence="2">
    <location>
        <begin position="161"/>
        <end position="163"/>
    </location>
</feature>
<feature type="strand" evidence="2">
    <location>
        <begin position="164"/>
        <end position="171"/>
    </location>
</feature>
<feature type="strand" evidence="2">
    <location>
        <begin position="173"/>
        <end position="175"/>
    </location>
</feature>
<feature type="strand" evidence="2">
    <location>
        <begin position="181"/>
        <end position="183"/>
    </location>
</feature>
<feature type="turn" evidence="2">
    <location>
        <begin position="189"/>
        <end position="191"/>
    </location>
</feature>
<feature type="strand" evidence="2">
    <location>
        <begin position="192"/>
        <end position="196"/>
    </location>
</feature>
<feature type="helix" evidence="2">
    <location>
        <begin position="203"/>
        <end position="208"/>
    </location>
</feature>
<feature type="helix" evidence="2">
    <location>
        <begin position="209"/>
        <end position="211"/>
    </location>
</feature>
<feature type="helix" evidence="2">
    <location>
        <begin position="215"/>
        <end position="227"/>
    </location>
</feature>
<sequence>MNYEGKTKIVKVTGDYALLEFKDDITAGDGLKHDVLTGKGSICAETTAILMKYLSEKGIKTHLVEYIPPRTLKVIPLKMFPLEVVVRLKKAGSFVRRYGGAEGEDLPVPLVEFFIKDDERHDPMVCVDHLEILGIATKKQAEKMKEAAVKITLALKEFFERANFELWDIKYEFGLDKDGNVVLGDEISPDTFRLRKKGEIFDKDVYRRDLGDPLKKYREVLELCRSLNSQ</sequence>
<accession>Q9X0X0</accession>
<gene>
    <name type="primary">purC</name>
    <name type="ordered locus">TM_1243</name>
</gene>